<comment type="function">
    <text evidence="2">Degrades proteins damaged by L-isoaspartyl residue formation (also known as beta-Asp residues). Probably performs the final step in the degradation of the reserve polymer cyanophycin (depolymerizes the building block L-beta-Asp-Arg). Also has L-asparaginase activity.</text>
</comment>
<comment type="catalytic activity">
    <reaction>
        <text>Cleavage of a beta-linked Asp residue from the N-terminus of a polypeptide.</text>
        <dbReference type="EC" id="3.4.19.5"/>
    </reaction>
</comment>
<comment type="biophysicochemical properties">
    <kinetics>
        <KM>0.66 mM for L-Asn</KM>
        <KM>1 mM for L-beta-Asp-Ala</KM>
        <KM>0.32 mM for L-beta-Asp-Arg</KM>
        <KM>1.6 mM for L-beta-Asp-Gly</KM>
        <KM>0.33 mM for L-beta-Asp-Leu</KM>
        <KM>0.55 mM for L-beta-Asp-Lys</KM>
        <KM>0.56 mM for L-beta-Asp-Phe</KM>
        <Vmax>1.6 umol/min/mg enzyme with L-Asn as substrate</Vmax>
        <Vmax>7.3 umol/min/mg enzyme with L-beta-Asp-Ala as substrate</Vmax>
        <Vmax>21.0 umol/min/mg enzyme with L-beta-Asp-Arg as substrate</Vmax>
        <Vmax>2.4 umol/min/mg enzyme with L-beta-Asp-Gly as substrate</Vmax>
        <Vmax>14.7 umol/min/mg enzyme with L-beta-Asp-Leu as substrate</Vmax>
        <Vmax>29.4 umol/min/mg enzyme with L-beta-Asp-Lys as substrate</Vmax>
        <Vmax>23.6 umol/min/mg enzyme with L-beta-Asp-Phe as substrate</Vmax>
        <text>Enzyme is inactive on alpha-aspartyl dipeptides.</text>
    </kinetics>
</comment>
<comment type="subunit">
    <text evidence="4">Heterotetramer of two alpha and two beta chains arranged as a dimer of alpha/beta heterodimers.</text>
</comment>
<comment type="PTM">
    <text>Cleaved into an alpha and beta chain by autocatalysis; this activates the enzyme. The N-terminal residue of the beta subunit is responsible for the nucleophile hydrolase activity.</text>
</comment>
<comment type="similarity">
    <text evidence="3">Belongs to the Ntn-hydrolase family.</text>
</comment>
<proteinExistence type="evidence at protein level"/>
<dbReference type="EC" id="3.4.19.5"/>
<dbReference type="EMBL" id="BA000022">
    <property type="protein sequence ID" value="BAA18480.1"/>
    <property type="molecule type" value="Genomic_DNA"/>
</dbReference>
<dbReference type="PIR" id="S76221">
    <property type="entry name" value="S76221"/>
</dbReference>
<dbReference type="SMR" id="P74383"/>
<dbReference type="STRING" id="1148.gene:10499361"/>
<dbReference type="MEROPS" id="T02.002"/>
<dbReference type="PaxDb" id="1148-1653567"/>
<dbReference type="EnsemblBacteria" id="BAA18480">
    <property type="protein sequence ID" value="BAA18480"/>
    <property type="gene ID" value="BAA18480"/>
</dbReference>
<dbReference type="KEGG" id="syn:sll0422"/>
<dbReference type="eggNOG" id="COG1446">
    <property type="taxonomic scope" value="Bacteria"/>
</dbReference>
<dbReference type="InParanoid" id="P74383"/>
<dbReference type="PhylomeDB" id="P74383"/>
<dbReference type="SABIO-RK" id="P74383"/>
<dbReference type="Proteomes" id="UP000001425">
    <property type="component" value="Chromosome"/>
</dbReference>
<dbReference type="GO" id="GO:0008798">
    <property type="term" value="F:beta-aspartyl-peptidase activity"/>
    <property type="evidence" value="ECO:0007669"/>
    <property type="project" value="UniProtKB-EC"/>
</dbReference>
<dbReference type="GO" id="GO:0016811">
    <property type="term" value="F:hydrolase activity, acting on carbon-nitrogen (but not peptide) bonds, in linear amides"/>
    <property type="evidence" value="ECO:0007669"/>
    <property type="project" value="UniProtKB-ARBA"/>
</dbReference>
<dbReference type="GO" id="GO:0006508">
    <property type="term" value="P:proteolysis"/>
    <property type="evidence" value="ECO:0007669"/>
    <property type="project" value="UniProtKB-KW"/>
</dbReference>
<dbReference type="CDD" id="cd14949">
    <property type="entry name" value="Asparaginase_2_like_3"/>
    <property type="match status" value="1"/>
</dbReference>
<dbReference type="FunFam" id="3.60.20.30:FF:000001">
    <property type="entry name" value="Isoaspartyl peptidase/L-asparaginase"/>
    <property type="match status" value="1"/>
</dbReference>
<dbReference type="Gene3D" id="3.60.20.30">
    <property type="entry name" value="(Glycosyl)asparaginase"/>
    <property type="match status" value="1"/>
</dbReference>
<dbReference type="InterPro" id="IPR029055">
    <property type="entry name" value="Ntn_hydrolases_N"/>
</dbReference>
<dbReference type="InterPro" id="IPR000246">
    <property type="entry name" value="Peptidase_T2"/>
</dbReference>
<dbReference type="PANTHER" id="PTHR10188">
    <property type="entry name" value="L-ASPARAGINASE"/>
    <property type="match status" value="1"/>
</dbReference>
<dbReference type="PANTHER" id="PTHR10188:SF6">
    <property type="entry name" value="N(4)-(BETA-N-ACETYLGLUCOSAMINYL)-L-ASPARAGINASE"/>
    <property type="match status" value="1"/>
</dbReference>
<dbReference type="Pfam" id="PF01112">
    <property type="entry name" value="Asparaginase_2"/>
    <property type="match status" value="1"/>
</dbReference>
<dbReference type="SUPFAM" id="SSF56235">
    <property type="entry name" value="N-terminal nucleophile aminohydrolases (Ntn hydrolases)"/>
    <property type="match status" value="1"/>
</dbReference>
<protein>
    <recommendedName>
        <fullName>Isoaspartyl peptidase/L-asparaginase</fullName>
        <ecNumber>3.4.19.5</ecNumber>
    </recommendedName>
    <alternativeName>
        <fullName>Beta-aspartyl-peptidase</fullName>
    </alternativeName>
    <alternativeName>
        <fullName>Isoaspartyl dipeptidase</fullName>
    </alternativeName>
    <component>
        <recommendedName>
            <fullName>Isoaspartyl peptidase/L-asparaginase subunit alpha</fullName>
        </recommendedName>
    </component>
    <component>
        <recommendedName>
            <fullName>Isoaspartyl peptidase/L-asparaginase subunit beta</fullName>
        </recommendedName>
    </component>
</protein>
<organism>
    <name type="scientific">Synechocystis sp. (strain ATCC 27184 / PCC 6803 / Kazusa)</name>
    <dbReference type="NCBI Taxonomy" id="1111708"/>
    <lineage>
        <taxon>Bacteria</taxon>
        <taxon>Bacillati</taxon>
        <taxon>Cyanobacteriota</taxon>
        <taxon>Cyanophyceae</taxon>
        <taxon>Synechococcales</taxon>
        <taxon>Merismopediaceae</taxon>
        <taxon>Synechocystis</taxon>
    </lineage>
</organism>
<accession>P74383</accession>
<gene>
    <name type="ordered locus">sll0422</name>
</gene>
<keyword id="KW-0068">Autocatalytic cleavage</keyword>
<keyword id="KW-0903">Direct protein sequencing</keyword>
<keyword id="KW-0378">Hydrolase</keyword>
<keyword id="KW-0645">Protease</keyword>
<keyword id="KW-1185">Reference proteome</keyword>
<name>ASGX_SYNY3</name>
<evidence type="ECO:0000250" key="1"/>
<evidence type="ECO:0000269" key="2">
    <source>
    </source>
</evidence>
<evidence type="ECO:0000305" key="3"/>
<evidence type="ECO:0000305" key="4">
    <source>
    </source>
</evidence>
<feature type="chain" id="PRO_0000184578" description="Isoaspartyl peptidase/L-asparaginase subunit alpha">
    <location>
        <begin position="1"/>
        <end position="172"/>
    </location>
</feature>
<feature type="chain" id="PRO_0000329015" description="Isoaspartyl peptidase/L-asparaginase subunit beta">
    <location>
        <begin position="173"/>
        <end position="329"/>
    </location>
</feature>
<feature type="active site" description="Nucleophile" evidence="1">
    <location>
        <position position="173"/>
    </location>
</feature>
<feature type="binding site" evidence="1">
    <location>
        <begin position="201"/>
        <end position="204"/>
    </location>
    <ligand>
        <name>substrate</name>
    </ligand>
</feature>
<feature type="binding site" evidence="1">
    <location>
        <begin position="222"/>
        <end position="225"/>
    </location>
    <ligand>
        <name>substrate</name>
    </ligand>
</feature>
<feature type="site" description="Cleavage; by autolysis">
    <location>
        <begin position="172"/>
        <end position="173"/>
    </location>
</feature>
<sequence>MTPKLIIHGGASSLDDKGGLATVRQSLHQIVAAVYETLTAGGSAMDAVVQGCELLENEPRFNAGTGSVLQSDGQVRMSASLMDGDRQNFSGVINVSRIKNPIQMAQFLQGQTDRILSDYGAADLAREMQLPIYDPATDFRIQEWMEERGEDVRKKMARLIADPTVGIEARKGTIGVVALDANGKIAAGTSTGGKGLERIGRVSDSAMPAGNYATRFAGVSCTGVGEDIINECLAAKVVIRVKDGQNLAQAMAKSITEALENNTDLGAIALDHQGHIAWGKTCPVLLAAYHTGTAIGDTLELTDGDHYGNASILKLQKTVKKIQTKTRGK</sequence>
<reference key="1">
    <citation type="journal article" date="2002" name="Biochem. J.">
        <title>Isoaspartyl dipeptidase activity of plant-type asparaginases.</title>
        <authorList>
            <person name="Hejazi M."/>
            <person name="Piotukh K."/>
            <person name="Mattow J."/>
            <person name="Deutzmann R."/>
            <person name="Volkmer-Engert R."/>
            <person name="Lockau W."/>
        </authorList>
    </citation>
    <scope>PROTEIN SEQUENCE OF 173-179</scope>
    <scope>FUNCTION</scope>
    <scope>SUBUNIT</scope>
    <scope>AUTOCATALYTIC CLEAVAGE</scope>
</reference>
<reference key="2">
    <citation type="journal article" date="1996" name="DNA Res.">
        <title>Sequence analysis of the genome of the unicellular cyanobacterium Synechocystis sp. strain PCC6803. II. Sequence determination of the entire genome and assignment of potential protein-coding regions.</title>
        <authorList>
            <person name="Kaneko T."/>
            <person name="Sato S."/>
            <person name="Kotani H."/>
            <person name="Tanaka A."/>
            <person name="Asamizu E."/>
            <person name="Nakamura Y."/>
            <person name="Miyajima N."/>
            <person name="Hirosawa M."/>
            <person name="Sugiura M."/>
            <person name="Sasamoto S."/>
            <person name="Kimura T."/>
            <person name="Hosouchi T."/>
            <person name="Matsuno A."/>
            <person name="Muraki A."/>
            <person name="Nakazaki N."/>
            <person name="Naruo K."/>
            <person name="Okumura S."/>
            <person name="Shimpo S."/>
            <person name="Takeuchi C."/>
            <person name="Wada T."/>
            <person name="Watanabe A."/>
            <person name="Yamada M."/>
            <person name="Yasuda M."/>
            <person name="Tabata S."/>
        </authorList>
    </citation>
    <scope>NUCLEOTIDE SEQUENCE [LARGE SCALE GENOMIC DNA]</scope>
    <source>
        <strain>ATCC 27184 / PCC 6803 / Kazusa</strain>
    </source>
</reference>
<reference key="3">
    <citation type="journal article" date="1997" name="Electrophoresis">
        <title>Towards a proteome project of cyanobacterium Synechocystis sp. strain PCC6803: linking 130 protein spots with their respective genes.</title>
        <authorList>
            <person name="Sazuka T."/>
            <person name="Ohara O."/>
        </authorList>
    </citation>
    <scope>PROTEIN SEQUENCE OF 1-14 AND 173-189</scope>
</reference>